<feature type="chain" id="PRO_1000019017" description="1-deoxy-D-xylulose-5-phosphate synthase">
    <location>
        <begin position="1"/>
        <end position="615"/>
    </location>
</feature>
<feature type="binding site" evidence="1">
    <location>
        <position position="72"/>
    </location>
    <ligand>
        <name>thiamine diphosphate</name>
        <dbReference type="ChEBI" id="CHEBI:58937"/>
    </ligand>
</feature>
<feature type="binding site" evidence="1">
    <location>
        <begin position="111"/>
        <end position="113"/>
    </location>
    <ligand>
        <name>thiamine diphosphate</name>
        <dbReference type="ChEBI" id="CHEBI:58937"/>
    </ligand>
</feature>
<feature type="binding site" evidence="1">
    <location>
        <position position="142"/>
    </location>
    <ligand>
        <name>Mg(2+)</name>
        <dbReference type="ChEBI" id="CHEBI:18420"/>
    </ligand>
</feature>
<feature type="binding site" evidence="1">
    <location>
        <begin position="143"/>
        <end position="144"/>
    </location>
    <ligand>
        <name>thiamine diphosphate</name>
        <dbReference type="ChEBI" id="CHEBI:58937"/>
    </ligand>
</feature>
<feature type="binding site" evidence="1">
    <location>
        <position position="171"/>
    </location>
    <ligand>
        <name>Mg(2+)</name>
        <dbReference type="ChEBI" id="CHEBI:18420"/>
    </ligand>
</feature>
<feature type="binding site" evidence="1">
    <location>
        <position position="171"/>
    </location>
    <ligand>
        <name>thiamine diphosphate</name>
        <dbReference type="ChEBI" id="CHEBI:58937"/>
    </ligand>
</feature>
<feature type="binding site" evidence="1">
    <location>
        <position position="278"/>
    </location>
    <ligand>
        <name>thiamine diphosphate</name>
        <dbReference type="ChEBI" id="CHEBI:58937"/>
    </ligand>
</feature>
<feature type="binding site" evidence="1">
    <location>
        <position position="360"/>
    </location>
    <ligand>
        <name>thiamine diphosphate</name>
        <dbReference type="ChEBI" id="CHEBI:58937"/>
    </ligand>
</feature>
<keyword id="KW-0414">Isoprene biosynthesis</keyword>
<keyword id="KW-0460">Magnesium</keyword>
<keyword id="KW-0479">Metal-binding</keyword>
<keyword id="KW-0784">Thiamine biosynthesis</keyword>
<keyword id="KW-0786">Thiamine pyrophosphate</keyword>
<keyword id="KW-0808">Transferase</keyword>
<sequence>MSKKFAHTQEELEKLSLKELENLAASMREKIIQVVSKNGGHLSSNLGAVELSIAMHLVFDAKKDPFIFDVSHQSYTHKLLSGKEEIFDTLRQINGLSGYTKPSEGDYFVAGHSSTSISLAVGACKAIALKGEKRIPVALIGDGALSAGMAYEALNELGDSKFPCVILLNDNEMSISKPIGAISKYLSQAMATQFYQSFKKRIAKMLDILPDSATYMAKRFEESFKLITPGLLFEELGLEYIGPIDGHNLGEIISALKQAKAMQKPCVIHTQTIKGKGYALAEGKHAKWHGVGAFDIDSGESVKKSDTKKSATEIFSKNLLDLASKYENIVGVTAAMPSGTGLDKLIEKYPNRFWDVAIAEQHAVTSMAAMAKEGFKPFIAIYSTFLQRAYDQVIHDCAIMNLNVVFAMDRAGIVGEDGETHQGVFDLSFLAPLPNFTLLAPRDEQMMQNIMEYAYLHQGPIAFRYPRGSFILDKEFNPCEIKLGKAQWLVKNSSEIAFLGYGQGVAKAWQVLRALQEMNNNANLIDLIFAKPLDEELLCELAKKSKIWFIFSENVKIGGIESLINNFLQKYDLHVKVVSFEYEDKFIEHGKTSEVEKNLEKDVNSLLTKVLKFYH</sequence>
<evidence type="ECO:0000255" key="1">
    <source>
        <dbReference type="HAMAP-Rule" id="MF_00315"/>
    </source>
</evidence>
<accession>A1VY40</accession>
<comment type="function">
    <text evidence="1">Catalyzes the acyloin condensation reaction between C atoms 2 and 3 of pyruvate and glyceraldehyde 3-phosphate to yield 1-deoxy-D-xylulose-5-phosphate (DXP).</text>
</comment>
<comment type="catalytic activity">
    <reaction evidence="1">
        <text>D-glyceraldehyde 3-phosphate + pyruvate + H(+) = 1-deoxy-D-xylulose 5-phosphate + CO2</text>
        <dbReference type="Rhea" id="RHEA:12605"/>
        <dbReference type="ChEBI" id="CHEBI:15361"/>
        <dbReference type="ChEBI" id="CHEBI:15378"/>
        <dbReference type="ChEBI" id="CHEBI:16526"/>
        <dbReference type="ChEBI" id="CHEBI:57792"/>
        <dbReference type="ChEBI" id="CHEBI:59776"/>
        <dbReference type="EC" id="2.2.1.7"/>
    </reaction>
</comment>
<comment type="cofactor">
    <cofactor evidence="1">
        <name>Mg(2+)</name>
        <dbReference type="ChEBI" id="CHEBI:18420"/>
    </cofactor>
    <text evidence="1">Binds 1 Mg(2+) ion per subunit.</text>
</comment>
<comment type="cofactor">
    <cofactor evidence="1">
        <name>thiamine diphosphate</name>
        <dbReference type="ChEBI" id="CHEBI:58937"/>
    </cofactor>
    <text evidence="1">Binds 1 thiamine pyrophosphate per subunit.</text>
</comment>
<comment type="pathway">
    <text evidence="1">Metabolic intermediate biosynthesis; 1-deoxy-D-xylulose 5-phosphate biosynthesis; 1-deoxy-D-xylulose 5-phosphate from D-glyceraldehyde 3-phosphate and pyruvate: step 1/1.</text>
</comment>
<comment type="subunit">
    <text evidence="1">Homodimer.</text>
</comment>
<comment type="similarity">
    <text evidence="1">Belongs to the transketolase family. DXPS subfamily.</text>
</comment>
<organism>
    <name type="scientific">Campylobacter jejuni subsp. jejuni serotype O:23/36 (strain 81-176)</name>
    <dbReference type="NCBI Taxonomy" id="354242"/>
    <lineage>
        <taxon>Bacteria</taxon>
        <taxon>Pseudomonadati</taxon>
        <taxon>Campylobacterota</taxon>
        <taxon>Epsilonproteobacteria</taxon>
        <taxon>Campylobacterales</taxon>
        <taxon>Campylobacteraceae</taxon>
        <taxon>Campylobacter</taxon>
    </lineage>
</organism>
<gene>
    <name evidence="1" type="primary">dxs</name>
    <name type="ordered locus">CJJ81176_0343</name>
</gene>
<protein>
    <recommendedName>
        <fullName evidence="1">1-deoxy-D-xylulose-5-phosphate synthase</fullName>
        <ecNumber evidence="1">2.2.1.7</ecNumber>
    </recommendedName>
    <alternativeName>
        <fullName evidence="1">1-deoxyxylulose-5-phosphate synthase</fullName>
        <shortName evidence="1">DXP synthase</shortName>
        <shortName evidence="1">DXPS</shortName>
    </alternativeName>
</protein>
<reference key="1">
    <citation type="submission" date="2006-12" db="EMBL/GenBank/DDBJ databases">
        <authorList>
            <person name="Fouts D.E."/>
            <person name="Nelson K.E."/>
            <person name="Sebastian Y."/>
        </authorList>
    </citation>
    <scope>NUCLEOTIDE SEQUENCE [LARGE SCALE GENOMIC DNA]</scope>
    <source>
        <strain>81-176</strain>
    </source>
</reference>
<proteinExistence type="inferred from homology"/>
<dbReference type="EC" id="2.2.1.7" evidence="1"/>
<dbReference type="EMBL" id="CP000538">
    <property type="protein sequence ID" value="EAQ73269.1"/>
    <property type="molecule type" value="Genomic_DNA"/>
</dbReference>
<dbReference type="RefSeq" id="WP_002859427.1">
    <property type="nucleotide sequence ID" value="NC_008787.1"/>
</dbReference>
<dbReference type="SMR" id="A1VY40"/>
<dbReference type="KEGG" id="cjj:CJJ81176_0343"/>
<dbReference type="eggNOG" id="COG1154">
    <property type="taxonomic scope" value="Bacteria"/>
</dbReference>
<dbReference type="HOGENOM" id="CLU_009227_1_4_7"/>
<dbReference type="UniPathway" id="UPA00064">
    <property type="reaction ID" value="UER00091"/>
</dbReference>
<dbReference type="Proteomes" id="UP000000646">
    <property type="component" value="Chromosome"/>
</dbReference>
<dbReference type="GO" id="GO:0005829">
    <property type="term" value="C:cytosol"/>
    <property type="evidence" value="ECO:0007669"/>
    <property type="project" value="TreeGrafter"/>
</dbReference>
<dbReference type="GO" id="GO:0008661">
    <property type="term" value="F:1-deoxy-D-xylulose-5-phosphate synthase activity"/>
    <property type="evidence" value="ECO:0007669"/>
    <property type="project" value="UniProtKB-UniRule"/>
</dbReference>
<dbReference type="GO" id="GO:0000287">
    <property type="term" value="F:magnesium ion binding"/>
    <property type="evidence" value="ECO:0007669"/>
    <property type="project" value="UniProtKB-UniRule"/>
</dbReference>
<dbReference type="GO" id="GO:0030976">
    <property type="term" value="F:thiamine pyrophosphate binding"/>
    <property type="evidence" value="ECO:0007669"/>
    <property type="project" value="UniProtKB-UniRule"/>
</dbReference>
<dbReference type="GO" id="GO:0052865">
    <property type="term" value="P:1-deoxy-D-xylulose 5-phosphate biosynthetic process"/>
    <property type="evidence" value="ECO:0007669"/>
    <property type="project" value="UniProtKB-UniPathway"/>
</dbReference>
<dbReference type="GO" id="GO:0019288">
    <property type="term" value="P:isopentenyl diphosphate biosynthetic process, methylerythritol 4-phosphate pathway"/>
    <property type="evidence" value="ECO:0007669"/>
    <property type="project" value="TreeGrafter"/>
</dbReference>
<dbReference type="GO" id="GO:0016114">
    <property type="term" value="P:terpenoid biosynthetic process"/>
    <property type="evidence" value="ECO:0007669"/>
    <property type="project" value="UniProtKB-UniRule"/>
</dbReference>
<dbReference type="GO" id="GO:0009228">
    <property type="term" value="P:thiamine biosynthetic process"/>
    <property type="evidence" value="ECO:0007669"/>
    <property type="project" value="UniProtKB-UniRule"/>
</dbReference>
<dbReference type="CDD" id="cd02007">
    <property type="entry name" value="TPP_DXS"/>
    <property type="match status" value="1"/>
</dbReference>
<dbReference type="CDD" id="cd07033">
    <property type="entry name" value="TPP_PYR_DXS_TK_like"/>
    <property type="match status" value="1"/>
</dbReference>
<dbReference type="Gene3D" id="3.40.50.920">
    <property type="match status" value="1"/>
</dbReference>
<dbReference type="Gene3D" id="3.40.50.970">
    <property type="match status" value="2"/>
</dbReference>
<dbReference type="HAMAP" id="MF_00315">
    <property type="entry name" value="DXP_synth"/>
    <property type="match status" value="1"/>
</dbReference>
<dbReference type="InterPro" id="IPR005477">
    <property type="entry name" value="Dxylulose-5-P_synthase"/>
</dbReference>
<dbReference type="InterPro" id="IPR029061">
    <property type="entry name" value="THDP-binding"/>
</dbReference>
<dbReference type="InterPro" id="IPR009014">
    <property type="entry name" value="Transketo_C/PFOR_II"/>
</dbReference>
<dbReference type="InterPro" id="IPR005475">
    <property type="entry name" value="Transketolase-like_Pyr-bd"/>
</dbReference>
<dbReference type="InterPro" id="IPR020826">
    <property type="entry name" value="Transketolase_BS"/>
</dbReference>
<dbReference type="InterPro" id="IPR033248">
    <property type="entry name" value="Transketolase_C"/>
</dbReference>
<dbReference type="InterPro" id="IPR049557">
    <property type="entry name" value="Transketolase_CS"/>
</dbReference>
<dbReference type="NCBIfam" id="TIGR00204">
    <property type="entry name" value="dxs"/>
    <property type="match status" value="1"/>
</dbReference>
<dbReference type="NCBIfam" id="NF003933">
    <property type="entry name" value="PRK05444.2-2"/>
    <property type="match status" value="1"/>
</dbReference>
<dbReference type="PANTHER" id="PTHR43322">
    <property type="entry name" value="1-D-DEOXYXYLULOSE 5-PHOSPHATE SYNTHASE-RELATED"/>
    <property type="match status" value="1"/>
</dbReference>
<dbReference type="PANTHER" id="PTHR43322:SF5">
    <property type="entry name" value="1-DEOXY-D-XYLULOSE-5-PHOSPHATE SYNTHASE, CHLOROPLASTIC"/>
    <property type="match status" value="1"/>
</dbReference>
<dbReference type="Pfam" id="PF13292">
    <property type="entry name" value="DXP_synthase_N"/>
    <property type="match status" value="1"/>
</dbReference>
<dbReference type="Pfam" id="PF02779">
    <property type="entry name" value="Transket_pyr"/>
    <property type="match status" value="1"/>
</dbReference>
<dbReference type="Pfam" id="PF02780">
    <property type="entry name" value="Transketolase_C"/>
    <property type="match status" value="1"/>
</dbReference>
<dbReference type="SMART" id="SM00861">
    <property type="entry name" value="Transket_pyr"/>
    <property type="match status" value="1"/>
</dbReference>
<dbReference type="SUPFAM" id="SSF52518">
    <property type="entry name" value="Thiamin diphosphate-binding fold (THDP-binding)"/>
    <property type="match status" value="2"/>
</dbReference>
<dbReference type="SUPFAM" id="SSF52922">
    <property type="entry name" value="TK C-terminal domain-like"/>
    <property type="match status" value="1"/>
</dbReference>
<dbReference type="PROSITE" id="PS00801">
    <property type="entry name" value="TRANSKETOLASE_1"/>
    <property type="match status" value="1"/>
</dbReference>
<dbReference type="PROSITE" id="PS00802">
    <property type="entry name" value="TRANSKETOLASE_2"/>
    <property type="match status" value="1"/>
</dbReference>
<name>DXS_CAMJJ</name>